<keyword id="KW-0027">Amidation</keyword>
<keyword id="KW-0878">Amphibian defense peptide</keyword>
<keyword id="KW-0929">Antimicrobial</keyword>
<keyword id="KW-0165">Cleavage on pair of basic residues</keyword>
<keyword id="KW-0964">Secreted</keyword>
<keyword id="KW-0732">Signal</keyword>
<accession>A0A193H329</accession>
<protein>
    <recommendedName>
        <fullName evidence="5">Cruzioseptin-8</fullName>
        <shortName evidence="5">CZS-8</shortName>
    </recommendedName>
</protein>
<name>CZS8_CRUCA</name>
<proteinExistence type="evidence at protein level"/>
<dbReference type="EMBL" id="KX065085">
    <property type="protein sequence ID" value="ANN87765.1"/>
    <property type="molecule type" value="mRNA"/>
</dbReference>
<dbReference type="GO" id="GO:0005576">
    <property type="term" value="C:extracellular region"/>
    <property type="evidence" value="ECO:0007669"/>
    <property type="project" value="UniProtKB-SubCell"/>
</dbReference>
<dbReference type="GO" id="GO:0006952">
    <property type="term" value="P:defense response"/>
    <property type="evidence" value="ECO:0007669"/>
    <property type="project" value="UniProtKB-KW"/>
</dbReference>
<dbReference type="InterPro" id="IPR022731">
    <property type="entry name" value="Dermaseptin_dom"/>
</dbReference>
<dbReference type="InterPro" id="IPR004275">
    <property type="entry name" value="Frog_antimicrobial_propeptide"/>
</dbReference>
<dbReference type="InterPro" id="IPR016322">
    <property type="entry name" value="FSAP"/>
</dbReference>
<dbReference type="Pfam" id="PF12121">
    <property type="entry name" value="DD_K"/>
    <property type="match status" value="1"/>
</dbReference>
<dbReference type="Pfam" id="PF03032">
    <property type="entry name" value="FSAP_sig_propep"/>
    <property type="match status" value="1"/>
</dbReference>
<dbReference type="PIRSF" id="PIRSF001822">
    <property type="entry name" value="Dermaseptin_precursor"/>
    <property type="match status" value="1"/>
</dbReference>
<reference evidence="8" key="1">
    <citation type="journal article" date="2016" name="J. Proteomics">
        <title>Peptidomic approach identifies cruzioseptins, a new family of potent antimicrobial peptides in the splendid leaf frog, Cruziohyla calcarifer.</title>
        <authorList>
            <person name="Proano-Bolanos C."/>
            <person name="Zhou M."/>
            <person name="Wang L."/>
            <person name="Coloma L.A."/>
            <person name="Chen T."/>
            <person name="Shaw C."/>
        </authorList>
    </citation>
    <scope>NUCLEOTIDE SEQUENCE [MRNA]</scope>
    <scope>SUBCELLULAR LOCATION</scope>
    <scope>MASS SPECTROMETRY</scope>
    <scope>AMIDATION AT GLN-72</scope>
    <scope>IDENTIFICATION BY MASS SPECTROMETRY</scope>
    <source>
        <tissue evidence="8">Skin secretion</tissue>
    </source>
</reference>
<evidence type="ECO:0000250" key="1">
    <source>
        <dbReference type="UniProtKB" id="A0A193H362"/>
    </source>
</evidence>
<evidence type="ECO:0000255" key="2"/>
<evidence type="ECO:0000256" key="3">
    <source>
        <dbReference type="SAM" id="MobiDB-lite"/>
    </source>
</evidence>
<evidence type="ECO:0000269" key="4">
    <source>
    </source>
</evidence>
<evidence type="ECO:0000303" key="5">
    <source>
    </source>
</evidence>
<evidence type="ECO:0000305" key="6"/>
<evidence type="ECO:0000305" key="7">
    <source>
    </source>
</evidence>
<evidence type="ECO:0000312" key="8">
    <source>
        <dbReference type="EMBL" id="ANN87765.1"/>
    </source>
</evidence>
<organism evidence="8">
    <name type="scientific">Cruziohyla calcarifer</name>
    <name type="common">Splendid leaf frog</name>
    <name type="synonym">Agalychnis calcarifer</name>
    <dbReference type="NCBI Taxonomy" id="318249"/>
    <lineage>
        <taxon>Eukaryota</taxon>
        <taxon>Metazoa</taxon>
        <taxon>Chordata</taxon>
        <taxon>Craniata</taxon>
        <taxon>Vertebrata</taxon>
        <taxon>Euteleostomi</taxon>
        <taxon>Amphibia</taxon>
        <taxon>Batrachia</taxon>
        <taxon>Anura</taxon>
        <taxon>Neobatrachia</taxon>
        <taxon>Hyloidea</taxon>
        <taxon>Hylidae</taxon>
        <taxon>Phyllomedusinae</taxon>
        <taxon>Cruziohyla</taxon>
    </lineage>
</organism>
<comment type="function">
    <text evidence="1">Has antimicrobial activity.</text>
</comment>
<comment type="subcellular location">
    <subcellularLocation>
        <location evidence="4">Secreted</location>
    </subcellularLocation>
</comment>
<comment type="tissue specificity">
    <text evidence="7">Expressed by the skin glands.</text>
</comment>
<comment type="mass spectrometry" mass="2780.5" method="Electrospray" evidence="4"/>
<comment type="similarity">
    <text evidence="6">Belongs to the frog skin active peptide (FSAP) family. Cruzioseptin subfamily.</text>
</comment>
<feature type="signal peptide" evidence="2">
    <location>
        <begin position="1"/>
        <end position="22"/>
    </location>
</feature>
<feature type="propeptide" id="PRO_0000439474" evidence="7">
    <location>
        <begin position="23"/>
        <end position="43"/>
    </location>
</feature>
<feature type="peptide" id="PRO_0000439475" description="Cruzioseptin-8" evidence="4">
    <location>
        <begin position="46"/>
        <end position="72"/>
    </location>
</feature>
<feature type="propeptide" id="PRO_0000439476" evidence="7">
    <location>
        <begin position="74"/>
        <end position="75"/>
    </location>
</feature>
<feature type="region of interest" description="Disordered" evidence="3">
    <location>
        <begin position="25"/>
        <end position="44"/>
    </location>
</feature>
<feature type="compositionally biased region" description="Acidic residues" evidence="3">
    <location>
        <begin position="30"/>
        <end position="41"/>
    </location>
</feature>
<feature type="modified residue" description="Glutamine amide" evidence="7">
    <location>
        <position position="72"/>
    </location>
</feature>
<sequence length="75" mass="8429">MAFLKKCLFLVLFLGLVSLSICEEEKREEENEEVQEDDDQSEEKRGFLDVIKHVGKAAGKAALNAVTEMVNQGEQ</sequence>